<comment type="function">
    <text evidence="1">One of the primary rRNA binding proteins, it binds directly to 16S rRNA central domain where it helps coordinate assembly of the platform of the 30S subunit.</text>
</comment>
<comment type="subunit">
    <text evidence="1">Part of the 30S ribosomal subunit.</text>
</comment>
<comment type="similarity">
    <text evidence="1">Belongs to the universal ribosomal protein uS8 family.</text>
</comment>
<dbReference type="EMBL" id="BA000001">
    <property type="protein sequence ID" value="BAA30878.1"/>
    <property type="molecule type" value="Genomic_DNA"/>
</dbReference>
<dbReference type="PIR" id="G71185">
    <property type="entry name" value="G71185"/>
</dbReference>
<dbReference type="RefSeq" id="WP_010885826.1">
    <property type="nucleotide sequence ID" value="NC_000961.1"/>
</dbReference>
<dbReference type="SMR" id="O59432"/>
<dbReference type="IntAct" id="O59432">
    <property type="interactions" value="1"/>
</dbReference>
<dbReference type="MINT" id="O59432"/>
<dbReference type="STRING" id="70601.gene:9378761"/>
<dbReference type="EnsemblBacteria" id="BAA30878">
    <property type="protein sequence ID" value="BAA30878"/>
    <property type="gene ID" value="BAA30878"/>
</dbReference>
<dbReference type="GeneID" id="1442607"/>
<dbReference type="KEGG" id="pho:PH1764"/>
<dbReference type="eggNOG" id="arCOG04091">
    <property type="taxonomic scope" value="Archaea"/>
</dbReference>
<dbReference type="OrthoDB" id="5670at2157"/>
<dbReference type="Proteomes" id="UP000000752">
    <property type="component" value="Chromosome"/>
</dbReference>
<dbReference type="GO" id="GO:1990904">
    <property type="term" value="C:ribonucleoprotein complex"/>
    <property type="evidence" value="ECO:0007669"/>
    <property type="project" value="UniProtKB-KW"/>
</dbReference>
<dbReference type="GO" id="GO:0005840">
    <property type="term" value="C:ribosome"/>
    <property type="evidence" value="ECO:0007669"/>
    <property type="project" value="UniProtKB-KW"/>
</dbReference>
<dbReference type="GO" id="GO:0019843">
    <property type="term" value="F:rRNA binding"/>
    <property type="evidence" value="ECO:0007669"/>
    <property type="project" value="UniProtKB-UniRule"/>
</dbReference>
<dbReference type="GO" id="GO:0003735">
    <property type="term" value="F:structural constituent of ribosome"/>
    <property type="evidence" value="ECO:0007669"/>
    <property type="project" value="InterPro"/>
</dbReference>
<dbReference type="GO" id="GO:0006412">
    <property type="term" value="P:translation"/>
    <property type="evidence" value="ECO:0007669"/>
    <property type="project" value="UniProtKB-UniRule"/>
</dbReference>
<dbReference type="FunFam" id="3.30.1370.30:FF:000001">
    <property type="entry name" value="40S ribosomal protein S15a"/>
    <property type="match status" value="1"/>
</dbReference>
<dbReference type="FunFam" id="3.30.1490.10:FF:000002">
    <property type="entry name" value="40S ribosomal protein S15a"/>
    <property type="match status" value="1"/>
</dbReference>
<dbReference type="Gene3D" id="3.30.1370.30">
    <property type="match status" value="1"/>
</dbReference>
<dbReference type="Gene3D" id="3.30.1490.10">
    <property type="match status" value="1"/>
</dbReference>
<dbReference type="HAMAP" id="MF_01302_A">
    <property type="entry name" value="Ribosomal_uS8_A"/>
    <property type="match status" value="1"/>
</dbReference>
<dbReference type="InterPro" id="IPR000630">
    <property type="entry name" value="Ribosomal_uS8"/>
</dbReference>
<dbReference type="InterPro" id="IPR047863">
    <property type="entry name" value="Ribosomal_uS8_CS"/>
</dbReference>
<dbReference type="InterPro" id="IPR035987">
    <property type="entry name" value="Ribosomal_uS8_sf"/>
</dbReference>
<dbReference type="NCBIfam" id="NF003115">
    <property type="entry name" value="PRK04034.1"/>
    <property type="match status" value="1"/>
</dbReference>
<dbReference type="PANTHER" id="PTHR11758">
    <property type="entry name" value="40S RIBOSOMAL PROTEIN S15A"/>
    <property type="match status" value="1"/>
</dbReference>
<dbReference type="Pfam" id="PF00410">
    <property type="entry name" value="Ribosomal_S8"/>
    <property type="match status" value="1"/>
</dbReference>
<dbReference type="SUPFAM" id="SSF56047">
    <property type="entry name" value="Ribosomal protein S8"/>
    <property type="match status" value="1"/>
</dbReference>
<dbReference type="PROSITE" id="PS00053">
    <property type="entry name" value="RIBOSOMAL_S8"/>
    <property type="match status" value="1"/>
</dbReference>
<name>RS8_PYRHO</name>
<proteinExistence type="inferred from homology"/>
<sequence length="130" mass="14735">MTLLDPLANALSHITNSERVGKREIYIKPASKLIGEVLRVMQKYGYIGEFEFIDDGRAGVYRVQLLGRINKAGAIKPRFPVKATEYEKWEKRFLPAFEFGILIVSTSQGVMSHKEARDRGIGGRLIAYVY</sequence>
<organism>
    <name type="scientific">Pyrococcus horikoshii (strain ATCC 700860 / DSM 12428 / JCM 9974 / NBRC 100139 / OT-3)</name>
    <dbReference type="NCBI Taxonomy" id="70601"/>
    <lineage>
        <taxon>Archaea</taxon>
        <taxon>Methanobacteriati</taxon>
        <taxon>Methanobacteriota</taxon>
        <taxon>Thermococci</taxon>
        <taxon>Thermococcales</taxon>
        <taxon>Thermococcaceae</taxon>
        <taxon>Pyrococcus</taxon>
    </lineage>
</organism>
<gene>
    <name evidence="1" type="primary">rps8</name>
    <name type="ordered locus">PH1764</name>
</gene>
<reference key="1">
    <citation type="journal article" date="1998" name="DNA Res.">
        <title>Complete sequence and gene organization of the genome of a hyper-thermophilic archaebacterium, Pyrococcus horikoshii OT3.</title>
        <authorList>
            <person name="Kawarabayasi Y."/>
            <person name="Sawada M."/>
            <person name="Horikawa H."/>
            <person name="Haikawa Y."/>
            <person name="Hino Y."/>
            <person name="Yamamoto S."/>
            <person name="Sekine M."/>
            <person name="Baba S."/>
            <person name="Kosugi H."/>
            <person name="Hosoyama A."/>
            <person name="Nagai Y."/>
            <person name="Sakai M."/>
            <person name="Ogura K."/>
            <person name="Otsuka R."/>
            <person name="Nakazawa H."/>
            <person name="Takamiya M."/>
            <person name="Ohfuku Y."/>
            <person name="Funahashi T."/>
            <person name="Tanaka T."/>
            <person name="Kudoh Y."/>
            <person name="Yamazaki J."/>
            <person name="Kushida N."/>
            <person name="Oguchi A."/>
            <person name="Aoki K."/>
            <person name="Yoshizawa T."/>
            <person name="Nakamura Y."/>
            <person name="Robb F.T."/>
            <person name="Horikoshi K."/>
            <person name="Masuchi Y."/>
            <person name="Shizuya H."/>
            <person name="Kikuchi H."/>
        </authorList>
    </citation>
    <scope>NUCLEOTIDE SEQUENCE [LARGE SCALE GENOMIC DNA]</scope>
    <source>
        <strain>ATCC 700860 / DSM 12428 / JCM 9974 / NBRC 100139 / OT-3</strain>
    </source>
</reference>
<keyword id="KW-0687">Ribonucleoprotein</keyword>
<keyword id="KW-0689">Ribosomal protein</keyword>
<keyword id="KW-0694">RNA-binding</keyword>
<keyword id="KW-0699">rRNA-binding</keyword>
<evidence type="ECO:0000255" key="1">
    <source>
        <dbReference type="HAMAP-Rule" id="MF_01302"/>
    </source>
</evidence>
<evidence type="ECO:0000305" key="2"/>
<feature type="chain" id="PRO_0000126550" description="Small ribosomal subunit protein uS8">
    <location>
        <begin position="1"/>
        <end position="130"/>
    </location>
</feature>
<protein>
    <recommendedName>
        <fullName evidence="1">Small ribosomal subunit protein uS8</fullName>
    </recommendedName>
    <alternativeName>
        <fullName evidence="2">30S ribosomal protein S8</fullName>
    </alternativeName>
</protein>
<accession>O59432</accession>